<protein>
    <recommendedName>
        <fullName evidence="29">Solute carrier family 2, facilitated glucose transporter member 9</fullName>
    </recommendedName>
    <alternativeName>
        <fullName evidence="24">Glucose transporter type 9</fullName>
        <shortName evidence="24">GLUT-9</shortName>
    </alternativeName>
    <alternativeName>
        <fullName evidence="29">Urate transporter</fullName>
    </alternativeName>
</protein>
<reference key="1">
    <citation type="journal article" date="2000" name="Genomics">
        <title>Cloning and expression analysis of a novel member of the facilitative glucose transporter family, SLC2A9 (GLUT9).</title>
        <authorList>
            <person name="Phay J.E."/>
            <person name="Hussain H.B."/>
            <person name="Moley J.F."/>
        </authorList>
    </citation>
    <scope>NUCLEOTIDE SEQUENCE [MRNA] (ISOFORM 1)</scope>
    <scope>VARIANTS ARG-25 AND LEU-350</scope>
    <source>
        <tissue>Kidney</tissue>
    </source>
</reference>
<reference key="2">
    <citation type="journal article" date="2005" name="Nature">
        <title>Generation and annotation of the DNA sequences of human chromosomes 2 and 4.</title>
        <authorList>
            <person name="Hillier L.W."/>
            <person name="Graves T.A."/>
            <person name="Fulton R.S."/>
            <person name="Fulton L.A."/>
            <person name="Pepin K.H."/>
            <person name="Minx P."/>
            <person name="Wagner-McPherson C."/>
            <person name="Layman D."/>
            <person name="Wylie K."/>
            <person name="Sekhon M."/>
            <person name="Becker M.C."/>
            <person name="Fewell G.A."/>
            <person name="Delehaunty K.D."/>
            <person name="Miner T.L."/>
            <person name="Nash W.E."/>
            <person name="Kremitzki C."/>
            <person name="Oddy L."/>
            <person name="Du H."/>
            <person name="Sun H."/>
            <person name="Bradshaw-Cordum H."/>
            <person name="Ali J."/>
            <person name="Carter J."/>
            <person name="Cordes M."/>
            <person name="Harris A."/>
            <person name="Isak A."/>
            <person name="van Brunt A."/>
            <person name="Nguyen C."/>
            <person name="Du F."/>
            <person name="Courtney L."/>
            <person name="Kalicki J."/>
            <person name="Ozersky P."/>
            <person name="Abbott S."/>
            <person name="Armstrong J."/>
            <person name="Belter E.A."/>
            <person name="Caruso L."/>
            <person name="Cedroni M."/>
            <person name="Cotton M."/>
            <person name="Davidson T."/>
            <person name="Desai A."/>
            <person name="Elliott G."/>
            <person name="Erb T."/>
            <person name="Fronick C."/>
            <person name="Gaige T."/>
            <person name="Haakenson W."/>
            <person name="Haglund K."/>
            <person name="Holmes A."/>
            <person name="Harkins R."/>
            <person name="Kim K."/>
            <person name="Kruchowski S.S."/>
            <person name="Strong C.M."/>
            <person name="Grewal N."/>
            <person name="Goyea E."/>
            <person name="Hou S."/>
            <person name="Levy A."/>
            <person name="Martinka S."/>
            <person name="Mead K."/>
            <person name="McLellan M.D."/>
            <person name="Meyer R."/>
            <person name="Randall-Maher J."/>
            <person name="Tomlinson C."/>
            <person name="Dauphin-Kohlberg S."/>
            <person name="Kozlowicz-Reilly A."/>
            <person name="Shah N."/>
            <person name="Swearengen-Shahid S."/>
            <person name="Snider J."/>
            <person name="Strong J.T."/>
            <person name="Thompson J."/>
            <person name="Yoakum M."/>
            <person name="Leonard S."/>
            <person name="Pearman C."/>
            <person name="Trani L."/>
            <person name="Radionenko M."/>
            <person name="Waligorski J.E."/>
            <person name="Wang C."/>
            <person name="Rock S.M."/>
            <person name="Tin-Wollam A.-M."/>
            <person name="Maupin R."/>
            <person name="Latreille P."/>
            <person name="Wendl M.C."/>
            <person name="Yang S.-P."/>
            <person name="Pohl C."/>
            <person name="Wallis J.W."/>
            <person name="Spieth J."/>
            <person name="Bieri T.A."/>
            <person name="Berkowicz N."/>
            <person name="Nelson J.O."/>
            <person name="Osborne J."/>
            <person name="Ding L."/>
            <person name="Meyer R."/>
            <person name="Sabo A."/>
            <person name="Shotland Y."/>
            <person name="Sinha P."/>
            <person name="Wohldmann P.E."/>
            <person name="Cook L.L."/>
            <person name="Hickenbotham M.T."/>
            <person name="Eldred J."/>
            <person name="Williams D."/>
            <person name="Jones T.A."/>
            <person name="She X."/>
            <person name="Ciccarelli F.D."/>
            <person name="Izaurralde E."/>
            <person name="Taylor J."/>
            <person name="Schmutz J."/>
            <person name="Myers R.M."/>
            <person name="Cox D.R."/>
            <person name="Huang X."/>
            <person name="McPherson J.D."/>
            <person name="Mardis E.R."/>
            <person name="Clifton S.W."/>
            <person name="Warren W.C."/>
            <person name="Chinwalla A.T."/>
            <person name="Eddy S.R."/>
            <person name="Marra M.A."/>
            <person name="Ovcharenko I."/>
            <person name="Furey T.S."/>
            <person name="Miller W."/>
            <person name="Eichler E.E."/>
            <person name="Bork P."/>
            <person name="Suyama M."/>
            <person name="Torrents D."/>
            <person name="Waterston R.H."/>
            <person name="Wilson R.K."/>
        </authorList>
    </citation>
    <scope>NUCLEOTIDE SEQUENCE [LARGE SCALE GENOMIC DNA]</scope>
</reference>
<reference key="3">
    <citation type="journal article" date="2004" name="Genome Res.">
        <title>The status, quality, and expansion of the NIH full-length cDNA project: the Mammalian Gene Collection (MGC).</title>
        <authorList>
            <consortium name="The MGC Project Team"/>
        </authorList>
    </citation>
    <scope>NUCLEOTIDE SEQUENCE [LARGE SCALE MRNA] (ISOFORMS 1 AND 2)</scope>
    <scope>VARIANTS ARG-25 AND LEU-350</scope>
    <source>
        <tissue>Lung</tissue>
        <tissue>Ovary</tissue>
    </source>
</reference>
<reference key="4">
    <citation type="journal article" date="2002" name="Cell Biol. Int.">
        <title>Human articular chondrocytes express three facilitative glucose transporter isoforms: GLUT1, GLUT3 and GLUT9.</title>
        <authorList>
            <person name="Mobasheri A."/>
            <person name="Neama G."/>
            <person name="Bell S."/>
            <person name="Richardson S."/>
            <person name="Carter S.D."/>
        </authorList>
    </citation>
    <scope>NUCLEOTIDE SEQUENCE [MRNA] OF 85-238 (ISOFORM 1)</scope>
    <scope>TISSUE SPECIFICITY</scope>
    <source>
        <tissue>Articular cartilage</tissue>
    </source>
</reference>
<reference key="5">
    <citation type="journal article" date="2004" name="J. Biol. Chem.">
        <title>Identification and characterization of human glucose transporter-like protein-9 (GLUT9): alternative splicing alters trafficking.</title>
        <authorList>
            <person name="Augustin R."/>
            <person name="Carayannopoulos M.O."/>
            <person name="Dowd L.O."/>
            <person name="Phay J.E."/>
            <person name="Moley J.F."/>
            <person name="Moley K.H."/>
        </authorList>
    </citation>
    <scope>FUNCTION</scope>
    <scope>SUBCELLULAR LOCATION</scope>
    <scope>TISSUE SPECIFICITY (ISOFORMS 1 AND 2)</scope>
</reference>
<reference key="6">
    <citation type="journal article" date="2007" name="Mol. Membr. Biol.">
        <title>A highly conserved hydrophobic motif in the exofacial vestibule of fructose transporting SLC2A proteins acts as a critical determinant of their substrate selectivity.</title>
        <authorList>
            <person name="Manolescu A.R."/>
            <person name="Augustin R."/>
            <person name="Moley K."/>
            <person name="Cheeseman C."/>
        </authorList>
    </citation>
    <scope>FUNCTION</scope>
    <scope>TRANSPORTER ACTIVITY</scope>
    <scope>BIOPHYSICOCHEMICAL PROPERTIES</scope>
    <scope>CHARACTERIZATION OF VARIANT VAL-296</scope>
</reference>
<reference key="7">
    <citation type="journal article" date="2008" name="PLoS Med.">
        <title>SLC2A9 is a high-capacity urate transporter in humans.</title>
        <authorList>
            <person name="Caulfield M.J."/>
            <person name="Munroe P.B."/>
            <person name="O'Neill D."/>
            <person name="Witkowska K."/>
            <person name="Charchar F.J."/>
            <person name="Doblado M."/>
            <person name="Evans S."/>
            <person name="Eyheramendy S."/>
            <person name="Onipinla A."/>
            <person name="Howard P."/>
            <person name="Shaw-Hawkins S."/>
            <person name="Dobson R.J."/>
            <person name="Wallace C."/>
            <person name="Newhouse S.J."/>
            <person name="Brown M."/>
            <person name="Connell J.M."/>
            <person name="Dominiczak A."/>
            <person name="Farrall M."/>
            <person name="Lathrop G.M."/>
            <person name="Samani N.J."/>
            <person name="Kumari M."/>
            <person name="Marmot M."/>
            <person name="Brunner E."/>
            <person name="Chambers J."/>
            <person name="Elliott P."/>
            <person name="Kooner J."/>
            <person name="Laan M."/>
            <person name="Org E."/>
            <person name="Veldre G."/>
            <person name="Viigimaa M."/>
            <person name="Cappuccio F.P."/>
            <person name="Ji C."/>
            <person name="Iacone R."/>
            <person name="Strazzullo P."/>
            <person name="Moley K.H."/>
            <person name="Cheeseman C."/>
        </authorList>
    </citation>
    <scope>FUNCTION</scope>
    <scope>TRANSPORTER ACTIVITY</scope>
    <scope>BIOPHYSICOCHEMICAL PROPERTIES</scope>
    <scope>ACTIVITY REGULATION</scope>
    <scope>POLYMORPHISM</scope>
</reference>
<reference key="8">
    <citation type="journal article" date="2012" name="Am. J. Physiol.">
        <title>Human SLC2A9a and SLC2A9b isoforms mediate electrogenic transport of urate with different characteristics in the presence of hexoses.</title>
        <authorList>
            <person name="Witkowska K."/>
            <person name="Smith K.M."/>
            <person name="Yao S.Y."/>
            <person name="Ng A.M."/>
            <person name="O'Neill D."/>
            <person name="Karpinski E."/>
            <person name="Young J.D."/>
            <person name="Cheeseman C.I."/>
        </authorList>
    </citation>
    <scope>FUNCTION</scope>
    <scope>ALTERNATIVE SPLICING</scope>
    <scope>BIOPHYSICOCHEMICAL PROPERTIES</scope>
    <scope>TRANSPORTER ACTIVITY</scope>
    <scope>ACTIVITY REGULATION</scope>
</reference>
<reference key="9">
    <citation type="journal article" date="2014" name="J. Proteomics">
        <title>An enzyme assisted RP-RPLC approach for in-depth analysis of human liver phosphoproteome.</title>
        <authorList>
            <person name="Bian Y."/>
            <person name="Song C."/>
            <person name="Cheng K."/>
            <person name="Dong M."/>
            <person name="Wang F."/>
            <person name="Huang J."/>
            <person name="Sun D."/>
            <person name="Wang L."/>
            <person name="Ye M."/>
            <person name="Zou H."/>
        </authorList>
    </citation>
    <scope>PHOSPHORYLATION [LARGE SCALE ANALYSIS] AT SER-9 AND SER-515</scope>
    <scope>IDENTIFICATION BY MASS SPECTROMETRY [LARGE SCALE ANALYSIS]</scope>
    <source>
        <tissue>Liver</tissue>
    </source>
</reference>
<reference key="10">
    <citation type="journal article" date="2014" name="PLoS ONE">
        <title>Expression of SLC2A9 isoforms in the kidney and their localization in polarized epithelial cells.</title>
        <authorList>
            <person name="Kimura T."/>
            <person name="Takahashi M."/>
            <person name="Yan K."/>
            <person name="Sakurai H."/>
        </authorList>
    </citation>
    <scope>SUBCELLULAR LOCATION (ISOFORMS 1 AND 2)</scope>
    <scope>TISSUE SPECIFICITY</scope>
</reference>
<reference key="11">
    <citation type="journal article" date="2017" name="J. Membr. Biol.">
        <title>Reassessment of GLUT7 and GLUT9 as putative fructose and glucose transporters.</title>
        <authorList>
            <person name="Ebert K."/>
            <person name="Ludwig M."/>
            <person name="Geillinger K.E."/>
            <person name="Schoberth G.C."/>
            <person name="Essenwanger J."/>
            <person name="Stolz J."/>
            <person name="Daniel H."/>
            <person name="Witt H."/>
        </authorList>
    </citation>
    <scope>FUNCTION</scope>
    <scope>TRANSPORTER ACTIVITY</scope>
    <scope>CAUTION</scope>
</reference>
<reference key="12">
    <citation type="journal article" date="2017" name="Sci. Rep.">
        <title>Identification of Key Residues for Urate Specific Transport in Human Glucose Transporter 9 (hSLC2A9).</title>
        <authorList>
            <person name="Long W."/>
            <person name="Panigrahi R."/>
            <person name="Panwar P."/>
            <person name="Wong K."/>
            <person name="O Neill D."/>
            <person name="Chen X.Z."/>
            <person name="Lemieux M.J."/>
            <person name="Cheeseman C.I."/>
        </authorList>
    </citation>
    <scope>FUNCTION</scope>
    <scope>TRANSPORTER ACTIVITY</scope>
    <scope>MUTAGENESIS OF CYS-157; CYS-210; CYS-326; CYS-330; LEU-332; CYS-427; CYS-480 AND CYS-488</scope>
</reference>
<reference key="13">
    <citation type="journal article" date="2023" name="Pflugers Arch.">
        <title>Vitamin C transporter SVCT1 serves a physiological role as a urate importer: functional analyses and in vivo investigations.</title>
        <authorList>
            <person name="Toyoda Y."/>
            <person name="Miyata H."/>
            <person name="Uchida N."/>
            <person name="Morimoto K."/>
            <person name="Shigesawa R."/>
            <person name="Kassai H."/>
            <person name="Nakao K."/>
            <person name="Tomioka N.H."/>
            <person name="Matsuo H."/>
            <person name="Ichida K."/>
            <person name="Hosoyamada M."/>
            <person name="Aiba A."/>
            <person name="Suzuki H."/>
            <person name="Takada T."/>
        </authorList>
    </citation>
    <scope>FUNCTION</scope>
    <scope>TRANSPORTER ACTIVITY</scope>
</reference>
<reference key="14">
    <citation type="journal article" date="2008" name="Am. J. Hum. Genet.">
        <title>Mutations in glucose transporter 9 gene SLC2A9 cause renal hypouricemia.</title>
        <authorList>
            <person name="Matsuo H."/>
            <person name="Chiba T."/>
            <person name="Nagamori S."/>
            <person name="Nakayama A."/>
            <person name="Domoto H."/>
            <person name="Phetdee K."/>
            <person name="Wiriyasermkul P."/>
            <person name="Kikuchi Y."/>
            <person name="Oda T."/>
            <person name="Nishiyama J."/>
            <person name="Nakamura T."/>
            <person name="Morimoto Y."/>
            <person name="Kamakura K."/>
            <person name="Sakurai Y."/>
            <person name="Nonoyama S."/>
            <person name="Kanai Y."/>
            <person name="Shinomiya N."/>
        </authorList>
    </citation>
    <scope>VARIANTS RHUC2 CYS-198 AND TRP-380</scope>
    <scope>CHARACTERIZATION OF VARIANTS RHUC2 CYS-198 AND TRP-380</scope>
</reference>
<reference key="15">
    <citation type="journal article" date="2008" name="Am. J. Hum. Genet.">
        <authorList>
            <person name="Matsuo H."/>
            <person name="Chiba T."/>
            <person name="Nagamori S."/>
            <person name="Nakayama A."/>
            <person name="Domoto H."/>
            <person name="Phetdee K."/>
            <person name="Wiriyasermkul P."/>
            <person name="Kikuchi Y."/>
            <person name="Oda T."/>
            <person name="Nishiyama J."/>
            <person name="Nakamura T."/>
            <person name="Morimoto Y."/>
            <person name="Kamakura K."/>
            <person name="Sakurai Y."/>
            <person name="Nonoyama S."/>
            <person name="Kanai Y."/>
            <person name="Shinomiya N."/>
        </authorList>
    </citation>
    <scope>ERRATUM OF PUBMED:19026395</scope>
</reference>
<reference key="16">
    <citation type="journal article" date="2008" name="J. Biol. Chem.">
        <title>Plasma urate level is directly regulated by a voltage-driven urate efflux transporter URATv1 (SLC2A9) in humans.</title>
        <authorList>
            <person name="Anzai N."/>
            <person name="Ichida K."/>
            <person name="Jutabha P."/>
            <person name="Kimura T."/>
            <person name="Babu E."/>
            <person name="Jin C.J."/>
            <person name="Srivastava S."/>
            <person name="Kitamura K."/>
            <person name="Hisatome I."/>
            <person name="Endou H."/>
            <person name="Sakurai H."/>
        </authorList>
    </citation>
    <scope>VARIANT RHUC2 ARG-412</scope>
    <scope>CHARACTERIZATION OF VARIANT RHUC2 ARG-412</scope>
    <scope>INVOLVEMENT IN RHUC2</scope>
    <scope>FUNCTION</scope>
    <scope>TRANSPORTER ACTIVITY</scope>
    <scope>SUBCELLULAR LOCATION</scope>
</reference>
<reference key="17">
    <citation type="journal article" date="2008" name="Nat. Genet.">
        <title>SLC2A9 influences uric acid concentrations with pronounced sex-specific effects.</title>
        <authorList>
            <person name="Doering A."/>
            <person name="Gieger C."/>
            <person name="Mehta D."/>
            <person name="Gohlke H."/>
            <person name="Prokisch H."/>
            <person name="Coassin S."/>
            <person name="Fischer G."/>
            <person name="Henke K."/>
            <person name="Klopp N."/>
            <person name="Kronenberg F."/>
            <person name="Paulweber B."/>
            <person name="Pfeufer A."/>
            <person name="Rosskopf D."/>
            <person name="Voelzke H."/>
            <person name="Illig T."/>
            <person name="Meitinger T."/>
            <person name="Wichmann H.-E."/>
            <person name="Meisinger C."/>
        </authorList>
    </citation>
    <scope>INVOLVEMENT IN THE REGULATION OF SERUM URIC ACID CONCENTRATION</scope>
    <scope>VARIANTS ASP-191; HIS-281; ILE-282 AND LEU-350</scope>
    <scope>POLYMORPHISM</scope>
</reference>
<reference key="18">
    <citation type="journal article" date="2008" name="Nat. Genet.">
        <title>SLC2A9 is a newly identified urate transporter influencing serum urate concentration, urate excretion and gout.</title>
        <authorList>
            <person name="Vitart V."/>
            <person name="Rudan I."/>
            <person name="Hayward C."/>
            <person name="Gray N.K."/>
            <person name="Floyd J."/>
            <person name="Palmer C.N."/>
            <person name="Knott S.A."/>
            <person name="Kolcic I."/>
            <person name="Polasek O."/>
            <person name="Graessler J."/>
            <person name="Wilson J.F."/>
            <person name="Marinaki A."/>
            <person name="Riches P.L."/>
            <person name="Shu X."/>
            <person name="Janicijevic B."/>
            <person name="Smolej-Narancic N."/>
            <person name="Gorgoni B."/>
            <person name="Morgan J."/>
            <person name="Campbell S."/>
            <person name="Biloglav Z."/>
            <person name="Barac-Lauc L."/>
            <person name="Pericic M."/>
            <person name="Klaric I.M."/>
            <person name="Zgaga L."/>
            <person name="Skaric-Juric T."/>
            <person name="Wild S.H."/>
            <person name="Richardson W.A."/>
            <person name="Hohenstein P."/>
            <person name="Kimber C.H."/>
            <person name="Tenesa A."/>
            <person name="Donnelly L.A."/>
            <person name="Fairbanks L.D."/>
            <person name="Aringer M."/>
            <person name="McKeigue P.M."/>
            <person name="Ralston S.H."/>
            <person name="Morris A.D."/>
            <person name="Rudan P."/>
            <person name="Hastie N.D."/>
            <person name="Campbell H."/>
            <person name="Wright A.F."/>
        </authorList>
    </citation>
    <scope>FUNCTION</scope>
    <scope>POLYMORPHISM</scope>
    <scope>VARIANTS ASN-22; ARG-216; MET-275; HIS-281 AND HIS-300</scope>
    <scope>CAUTION</scope>
    <scope>TRANSPORTER ACTIVITY</scope>
</reference>
<reference key="19">
    <citation type="journal article" date="2010" name="J. Am. Soc. Nephrol.">
        <title>Homozygous SLC2A9 mutations cause severe renal hypouricemia.</title>
        <authorList>
            <person name="Dinour D."/>
            <person name="Gray N.K."/>
            <person name="Campbell S."/>
            <person name="Shu X."/>
            <person name="Sawyer L."/>
            <person name="Richardson W."/>
            <person name="Rechavi G."/>
            <person name="Amariglio N."/>
            <person name="Ganon L."/>
            <person name="Sela B.A."/>
            <person name="Bahat H."/>
            <person name="Goldman M."/>
            <person name="Weissgarten J."/>
            <person name="Millar M.R."/>
            <person name="Wright A.F."/>
            <person name="Holtzman E.J."/>
        </authorList>
    </citation>
    <scope>VARIANT RHUC2 ARG-75</scope>
    <scope>CHARACTERIZATION OF VARIANT RHUC2 ARG-75</scope>
    <scope>INVOLVEMENT IN RHUC2</scope>
</reference>
<reference key="20">
    <citation type="journal article" date="2011" name="Nucleosides Nucleotides Nucleic Acids">
        <title>Pathogenic GLUT9 mutations causing renal hypouricemia type 2 (RHUC2).</title>
        <authorList>
            <person name="Kawamura Y."/>
            <person name="Matsuo H."/>
            <person name="Chiba T."/>
            <person name="Nagamori S."/>
            <person name="Nakayama A."/>
            <person name="Inoue H."/>
            <person name="Utsumi Y."/>
            <person name="Oda T."/>
            <person name="Nishiyama J."/>
            <person name="Kanai Y."/>
            <person name="Shinomiya N."/>
        </authorList>
    </citation>
    <scope>VARIANTS RHUC2 CYS-198 AND TRP-380</scope>
    <scope>CHARACTERIZATION OF VARIANTS RHUC2 CYS-198; TRP-380 AND ARG-412</scope>
    <scope>INVOLVEMENT IN RHUC2</scope>
</reference>
<reference key="21">
    <citation type="journal article" date="2012" name="Nephrol. Dial. Transplant.">
        <title>Two novel homozygous SLC2A9 mutations cause renal hypouricemia type 2.</title>
        <authorList>
            <person name="Dinour D."/>
            <person name="Gray N.K."/>
            <person name="Ganon L."/>
            <person name="Knox A.J."/>
            <person name="Shalev H."/>
            <person name="Sela B.A."/>
            <person name="Campbell S."/>
            <person name="Sawyer L."/>
            <person name="Shu X."/>
            <person name="Valsamidou E."/>
            <person name="Landau D."/>
            <person name="Wright A.F."/>
            <person name="Holtzman E.J."/>
        </authorList>
    </citation>
    <scope>VARIANTS RHUC2 MET-125 AND CYS-171</scope>
    <scope>CHARACTERIZATION OF VARIANTS RHUC2 MET-125 AND CYS-171</scope>
</reference>
<reference key="22">
    <citation type="journal article" date="2012" name="Pediatr. Nephrol.">
        <title>Acute kidney injury in two children caused by renal hypouricaemia type 2.</title>
        <authorList>
            <person name="Stiburkova B."/>
            <person name="Taylor J."/>
            <person name="Marinaki A.M."/>
            <person name="Sebesta I."/>
        </authorList>
    </citation>
    <scope>VARIANTS RHUC2 ARG-216 AND SER-333</scope>
    <scope>VARIANTS ILE-282; HIS-294 AND LEU-350</scope>
</reference>
<reference key="23">
    <citation type="journal article" date="2014" name="PLoS ONE">
        <title>Complex analysis of urate transporters SLC2A9, SLC22A12 and functional characterization of non-synonymous allelic variants of GLUT9 in the Czech population: no evidence of effect on hyperuricemia and gout.</title>
        <authorList>
            <person name="Hurba O."/>
            <person name="Mancikova A."/>
            <person name="Krylov V."/>
            <person name="Pavlikova M."/>
            <person name="Pavelka K."/>
            <person name="Stiburkova B."/>
        </authorList>
    </citation>
    <scope>CHARACTERIZATION OF VARIANTS ARG-25; MET-169; MET-275; HIS-281; ILE-282; HIS-294 AND LEU-350</scope>
</reference>
<reference key="24">
    <citation type="journal article" date="2018" name="Front. Physiol.">
        <title>Human Mutations in SLC2A9 (Glut9) Affect Transport Capacity for Urate.</title>
        <authorList>
            <person name="Ruiz A."/>
            <person name="Gautschi I."/>
            <person name="Schild L."/>
            <person name="Bonny O."/>
        </authorList>
    </citation>
    <scope>FUNCTION</scope>
    <scope>TRANSPORTER ACTIVITY</scope>
    <scope>CHARACTERIZATION OF VARIANTS RHUC2 ARG-75; MET-125; CYS-171; CYS-198; ARG-216; SER-333; TRP-380 AND ARG-412</scope>
    <scope>CHARACTERIZATION OF VARIANTS HIS-294 AND LEU-350</scope>
    <scope>MUTAGENESIS OF CYS-210</scope>
</reference>
<name>GTR9_HUMAN</name>
<comment type="function">
    <text evidence="9 10 11 17 20">High-capacity urate transporter, which may play a role in the urate reabsorption by proximal tubules (PubMed:18327257, PubMed:18701466, PubMed:22647630, PubMed:28083649, PubMed:36749388). May have a residual high-affinity, low-capacity glucose and fructose transporter activity (PubMed:18327257, PubMed:18701466, PubMed:18842065). Transports urate at rates 45- to 60-fold faster than glucose (PubMed:18842065). Does not transport galactose (PubMed:28083649). May mediate small uptake of adenine but not of other nucleobases (PubMed:22647630).</text>
</comment>
<comment type="catalytic activity">
    <reaction evidence="10 11 17 20 21 23">
        <text>urate(out) = urate(in)</text>
        <dbReference type="Rhea" id="RHEA:60368"/>
        <dbReference type="ChEBI" id="CHEBI:17775"/>
    </reaction>
</comment>
<comment type="activity regulation">
    <molecule>Isoform 1</molecule>
    <text evidence="11 17">Extracellular glucose and urate accelerate urate efflux (PubMed:18842065, PubMed:22647630). Intracellular urate, glucose and fructose accelerate urate influx (PubMed:22647630).</text>
</comment>
<comment type="activity regulation">
    <molecule>Isoform 2</molecule>
    <text evidence="17">No effect of extracellular urate, glucose or fructose on urate efflux. Intracellular urate and fructose slightly accelerate urate influx.</text>
</comment>
<comment type="biophysicochemical properties">
    <kinetics>
        <KM evidence="9 11">900 uM for urate</KM>
        <KM evidence="22">433 uM for urate</KM>
    </kinetics>
</comment>
<comment type="biophysicochemical properties">
    <molecule>Isoform 1</molecule>
    <kinetics>
        <KM evidence="17">1 mM for urate influx</KM>
        <KM evidence="17">1 mM for urate efflux</KM>
    </kinetics>
</comment>
<comment type="biophysicochemical properties">
    <molecule>Isoform 2</molecule>
    <kinetics>
        <KM evidence="17">1 mM for urate influx</KM>
        <KM evidence="17">1 mM for urate efflux</KM>
    </kinetics>
</comment>
<comment type="interaction">
    <interactant intactId="EBI-25396304">
        <id>Q9NRM0-1</id>
    </interactant>
    <interactant intactId="EBI-2814031">
        <id>Q5J8M3</id>
        <label>EMC4</label>
    </interactant>
    <organismsDiffer>false</organismsDiffer>
    <experiments>3</experiments>
</comment>
<comment type="interaction">
    <interactant intactId="EBI-25396304">
        <id>Q9NRM0-1</id>
    </interactant>
    <interactant intactId="EBI-2866431">
        <id>Q9Y287</id>
        <label>ITM2B</label>
    </interactant>
    <organismsDiffer>false</organismsDiffer>
    <experiments>4</experiments>
</comment>
<comment type="interaction">
    <interactant intactId="EBI-25396386">
        <id>Q9NRM0-2</id>
    </interactant>
    <interactant intactId="EBI-2814031">
        <id>Q5J8M3</id>
        <label>EMC4</label>
    </interactant>
    <organismsDiffer>false</organismsDiffer>
    <experiments>2</experiments>
</comment>
<comment type="interaction">
    <interactant intactId="EBI-25396386">
        <id>Q9NRM0-2</id>
    </interactant>
    <interactant intactId="EBI-2866431">
        <id>Q9Y287</id>
        <label>ITM2B</label>
    </interactant>
    <organismsDiffer>false</organismsDiffer>
    <experiments>2</experiments>
</comment>
<comment type="subcellular location">
    <molecule>Isoform 1</molecule>
    <subcellularLocation>
        <location evidence="10">Cell membrane</location>
        <topology>Multi-pass membrane protein</topology>
    </subcellularLocation>
    <subcellularLocation>
        <location evidence="5 18">Basolateral cell membrane</location>
        <topology evidence="5">Multi-pass membrane protein</topology>
    </subcellularLocation>
</comment>
<comment type="subcellular location">
    <molecule>Isoform 2</molecule>
    <subcellularLocation>
        <location evidence="10">Cell membrane</location>
    </subcellularLocation>
    <subcellularLocation>
        <location evidence="18">Apical cell membrane</location>
        <topology>Multi-pass membrane protein</topology>
    </subcellularLocation>
    <subcellularLocation>
        <location evidence="5 18">Basolateral cell membrane</location>
        <topology evidence="5">Multi-pass membrane protein</topology>
    </subcellularLocation>
</comment>
<comment type="alternative products">
    <event type="alternative splicing"/>
    <isoform>
        <id>Q9NRM0-1</id>
        <name>1</name>
        <name evidence="28">SLC2A9-L</name>
        <name evidence="27">SLC2A9a</name>
        <sequence type="displayed"/>
    </isoform>
    <isoform>
        <id>Q9NRM0-2</id>
        <name>2</name>
        <name evidence="25">GLUT9deltaN</name>
        <name evidence="28">SLC2A9-S</name>
        <name evidence="27">SLC2A9b</name>
        <sequence type="described" ref="VSP_034860"/>
    </isoform>
</comment>
<comment type="tissue specificity">
    <molecule>Isoform 1</molecule>
    <text evidence="4 18">Most strongly expressed in basolateral membranes of proximal renal tubular cells, liver and placenta. Also detected in lung, blood leukocytes, heart skeletal muscle and chondrocytes from articular cartilage. Detected in kidney membrane (at protein level).</text>
</comment>
<comment type="tissue specificity">
    <molecule>Isoform 2</molecule>
    <text evidence="18">Only detected in the apical membranes of polarized renal tubular cells and placenta. Detected in kidney membrane (at protein level).</text>
</comment>
<comment type="polymorphism">
    <text evidence="8 9 11">Genetic variations in SLC2A9 influence the variance in serum uric acid concentrations and define the serum uric acid concentration quantitative trait locus 2 (UAQTL2) [MIM:612076] with pronounced sex-specific effects. The proportion of the variance of serum uric acid concentrations explained by genotypes is about 1.2% in men and 6% in women, and the percentage accounted for by expression levels is 3.5% in men and 15% in women (PubMed:18327256, PubMed:18327257, PubMed:18842065). Excess serum accumulation of uric acid can lead to the development of gout (PubMed:18327256, PubMed:18327257).</text>
</comment>
<comment type="disease" evidence="10 12 13 14 15 16 22">
    <disease id="DI-03137">
        <name>Hypouricemia renal 2</name>
        <acronym>RHUC2</acronym>
        <description>A disorder characterized by impaired uric acid reabsorption at the apical membrane of proximal renal tubule cells, and high urinary urate excretion. Patients often appear asymptomatic, but may be subject to exercise-induced acute renal failure, chronic renal dysfunction and nephrolithiasis.</description>
        <dbReference type="MIM" id="612076"/>
    </disease>
    <text>The disease is caused by variants affecting the gene represented in this entry.</text>
</comment>
<comment type="similarity">
    <text evidence="29">Belongs to the major facilitator superfamily. Sugar transporter (TC 2.A.1.1) family. Glucose transporter subfamily.</text>
</comment>
<comment type="caution">
    <text evidence="7 9 11 20">High-capacity urate transporter that was first described as a fructose and glucose transporter. Also described in the literature as high-affinity and low-capacity glucose and fructose transporter (PubMed:17710649, PubMed:18327257, PubMed:18842065). However, another group could not confirm transporter activity for glucose or fructose (PubMed:28083649).</text>
</comment>
<sequence>MARKQNRNSKELGLVPLTDDTSHAGPPGPGRALLECDHLRSGVPGGRRRKDWSCSLLVASLAGAFGSSFLYGYNLSVVNAPTPYIKAFYNESWERRHGRPIDPDTLTLLWSVTVSIFAIGGLVGTLIVKMIGKVLGRKHTLLANNGFAISAALLMACSLQAGAFEMLIVGRFIMGIDGGVALSVLPMYLSEISPKEIRGSLGQVTAIFICIGVFTGQLLGLPELLGKESTWPYLFGVIVVPAVVQLLSLPFLPDSPRYLLLEKHNEARAVKAFQTFLGKADVSQEVEEVLAESRVQRSIRLVSVLELLRAPYVRWQVVTVIVTMACYQLCGLNAIWFYTNSIFGKAGIPPAKIPYVTLSTGGIETLAAVFSGLVIEHLGRRPLLIGGFGLMGLFFGTLTITLTLQDHAPWVPYLSIVGILAIIASFCSGPGGIPFILTGEFFQQSQRPAAFIIAGTVNWLSNFAVGLLFPFIQKSLDTYCFLVFATICITGAIYLYFVLPETKNRTYAEISQAFSKRNKAYPPEEKIDSAVTDGKINGRP</sequence>
<accession>Q9NRM0</accession>
<accession>Q0VGC4</accession>
<accession>Q4W5D1</accession>
<accession>Q8WV30</accession>
<accession>Q96P00</accession>
<keyword id="KW-0002">3D-structure</keyword>
<keyword id="KW-0025">Alternative splicing</keyword>
<keyword id="KW-1003">Cell membrane</keyword>
<keyword id="KW-0225">Disease variant</keyword>
<keyword id="KW-0325">Glycoprotein</keyword>
<keyword id="KW-0472">Membrane</keyword>
<keyword id="KW-0597">Phosphoprotein</keyword>
<keyword id="KW-1267">Proteomics identification</keyword>
<keyword id="KW-1185">Reference proteome</keyword>
<keyword id="KW-0812">Transmembrane</keyword>
<keyword id="KW-1133">Transmembrane helix</keyword>
<dbReference type="EMBL" id="AF210317">
    <property type="protein sequence ID" value="AAF85942.1"/>
    <property type="molecule type" value="mRNA"/>
</dbReference>
<dbReference type="EMBL" id="AC005674">
    <property type="status" value="NOT_ANNOTATED_CDS"/>
    <property type="molecule type" value="Genomic_DNA"/>
</dbReference>
<dbReference type="EMBL" id="AC098976">
    <property type="status" value="NOT_ANNOTATED_CDS"/>
    <property type="molecule type" value="Genomic_DNA"/>
</dbReference>
<dbReference type="EMBL" id="AC108199">
    <property type="protein sequence ID" value="AAY41052.1"/>
    <property type="molecule type" value="Genomic_DNA"/>
</dbReference>
<dbReference type="EMBL" id="BC018897">
    <property type="protein sequence ID" value="AAH18897.1"/>
    <property type="molecule type" value="mRNA"/>
</dbReference>
<dbReference type="EMBL" id="BC110414">
    <property type="protein sequence ID" value="AAI10415.1"/>
    <property type="molecule type" value="mRNA"/>
</dbReference>
<dbReference type="EMBL" id="AF421859">
    <property type="protein sequence ID" value="AAL16939.1"/>
    <property type="molecule type" value="mRNA"/>
</dbReference>
<dbReference type="CCDS" id="CCDS3406.1">
    <molecule id="Q9NRM0-2"/>
</dbReference>
<dbReference type="CCDS" id="CCDS3407.1">
    <molecule id="Q9NRM0-1"/>
</dbReference>
<dbReference type="RefSeq" id="NP_001001290.1">
    <molecule id="Q9NRM0-2"/>
    <property type="nucleotide sequence ID" value="NM_001001290.2"/>
</dbReference>
<dbReference type="RefSeq" id="NP_064425.2">
    <molecule id="Q9NRM0-1"/>
    <property type="nucleotide sequence ID" value="NM_020041.2"/>
</dbReference>
<dbReference type="RefSeq" id="XP_047271931.1">
    <molecule id="Q9NRM0-2"/>
    <property type="nucleotide sequence ID" value="XM_047415975.1"/>
</dbReference>
<dbReference type="PDB" id="8Y65">
    <property type="method" value="EM"/>
    <property type="resolution" value="3.51 A"/>
    <property type="chains" value="A=2-540"/>
</dbReference>
<dbReference type="PDB" id="8Y66">
    <property type="method" value="EM"/>
    <property type="resolution" value="3.28 A"/>
    <property type="chains" value="A=2-540"/>
</dbReference>
<dbReference type="PDBsum" id="8Y65"/>
<dbReference type="PDBsum" id="8Y66"/>
<dbReference type="EMDB" id="EMD-38966"/>
<dbReference type="EMDB" id="EMD-38968"/>
<dbReference type="EMDB" id="EMD-45406"/>
<dbReference type="EMDB" id="EMD-45421"/>
<dbReference type="SMR" id="Q9NRM0"/>
<dbReference type="BioGRID" id="121156">
    <property type="interactions" value="64"/>
</dbReference>
<dbReference type="FunCoup" id="Q9NRM0">
    <property type="interactions" value="280"/>
</dbReference>
<dbReference type="IntAct" id="Q9NRM0">
    <property type="interactions" value="33"/>
</dbReference>
<dbReference type="STRING" id="9606.ENSP00000264784"/>
<dbReference type="BindingDB" id="Q9NRM0"/>
<dbReference type="ChEMBL" id="CHEMBL2052034"/>
<dbReference type="DrugBank" id="DB01914">
    <property type="generic name" value="D-glucose"/>
</dbReference>
<dbReference type="DrugBank" id="DB09341">
    <property type="generic name" value="Dextrose, unspecified form"/>
</dbReference>
<dbReference type="DrugBank" id="DB09502">
    <property type="generic name" value="Fludeoxyglucose (18F)"/>
</dbReference>
<dbReference type="DrugBank" id="DB00678">
    <property type="generic name" value="Losartan"/>
</dbReference>
<dbReference type="DrugBank" id="DB01250">
    <property type="generic name" value="Olsalazine"/>
</dbReference>
<dbReference type="DrugBank" id="DB01032">
    <property type="generic name" value="Probenecid"/>
</dbReference>
<dbReference type="DrugBank" id="DB08844">
    <property type="generic name" value="Uric acid"/>
</dbReference>
<dbReference type="TCDB" id="2.A.1.1.72">
    <property type="family name" value="the major facilitator superfamily (mfs)"/>
</dbReference>
<dbReference type="GlyCosmos" id="Q9NRM0">
    <property type="glycosylation" value="1 site, No reported glycans"/>
</dbReference>
<dbReference type="GlyGen" id="Q9NRM0">
    <property type="glycosylation" value="1 site"/>
</dbReference>
<dbReference type="iPTMnet" id="Q9NRM0"/>
<dbReference type="PhosphoSitePlus" id="Q9NRM0"/>
<dbReference type="BioMuta" id="SLC2A9"/>
<dbReference type="DMDM" id="300669647"/>
<dbReference type="jPOST" id="Q9NRM0"/>
<dbReference type="MassIVE" id="Q9NRM0"/>
<dbReference type="PaxDb" id="9606-ENSP00000264784"/>
<dbReference type="PeptideAtlas" id="Q9NRM0"/>
<dbReference type="ProteomicsDB" id="82386">
    <molecule id="Q9NRM0-1"/>
</dbReference>
<dbReference type="ProteomicsDB" id="82387">
    <molecule id="Q9NRM0-2"/>
</dbReference>
<dbReference type="Antibodypedia" id="22860">
    <property type="antibodies" value="314 antibodies from 25 providers"/>
</dbReference>
<dbReference type="DNASU" id="56606"/>
<dbReference type="Ensembl" id="ENST00000264784.8">
    <molecule id="Q9NRM0-1"/>
    <property type="protein sequence ID" value="ENSP00000264784.3"/>
    <property type="gene ID" value="ENSG00000109667.12"/>
</dbReference>
<dbReference type="Ensembl" id="ENST00000309065.7">
    <molecule id="Q9NRM0-2"/>
    <property type="protein sequence ID" value="ENSP00000311383.3"/>
    <property type="gene ID" value="ENSG00000109667.12"/>
</dbReference>
<dbReference type="Ensembl" id="ENST00000506583.5">
    <molecule id="Q9NRM0-2"/>
    <property type="protein sequence ID" value="ENSP00000422209.1"/>
    <property type="gene ID" value="ENSG00000109667.12"/>
</dbReference>
<dbReference type="GeneID" id="56606"/>
<dbReference type="KEGG" id="hsa:56606"/>
<dbReference type="MANE-Select" id="ENST00000264784.8">
    <property type="protein sequence ID" value="ENSP00000264784.3"/>
    <property type="RefSeq nucleotide sequence ID" value="NM_020041.3"/>
    <property type="RefSeq protein sequence ID" value="NP_064425.2"/>
</dbReference>
<dbReference type="UCSC" id="uc003gmc.4">
    <molecule id="Q9NRM0-1"/>
    <property type="organism name" value="human"/>
</dbReference>
<dbReference type="AGR" id="HGNC:13446"/>
<dbReference type="CTD" id="56606"/>
<dbReference type="DisGeNET" id="56606"/>
<dbReference type="GeneCards" id="SLC2A9"/>
<dbReference type="HGNC" id="HGNC:13446">
    <property type="gene designation" value="SLC2A9"/>
</dbReference>
<dbReference type="HPA" id="ENSG00000109667">
    <property type="expression patterns" value="Tissue enhanced (kidney, liver)"/>
</dbReference>
<dbReference type="MalaCards" id="SLC2A9"/>
<dbReference type="MIM" id="606142">
    <property type="type" value="gene"/>
</dbReference>
<dbReference type="MIM" id="612076">
    <property type="type" value="phenotype"/>
</dbReference>
<dbReference type="neXtProt" id="NX_Q9NRM0"/>
<dbReference type="OpenTargets" id="ENSG00000109667"/>
<dbReference type="Orphanet" id="94088">
    <property type="disease" value="Hereditary renal hypouricemia"/>
</dbReference>
<dbReference type="PharmGKB" id="PA37771"/>
<dbReference type="VEuPathDB" id="HostDB:ENSG00000109667"/>
<dbReference type="eggNOG" id="KOG0569">
    <property type="taxonomic scope" value="Eukaryota"/>
</dbReference>
<dbReference type="GeneTree" id="ENSGT00940000159192"/>
<dbReference type="HOGENOM" id="CLU_001265_30_11_1"/>
<dbReference type="InParanoid" id="Q9NRM0"/>
<dbReference type="OMA" id="PADHIYM"/>
<dbReference type="OrthoDB" id="4540492at2759"/>
<dbReference type="PAN-GO" id="Q9NRM0">
    <property type="GO annotations" value="4 GO annotations based on evolutionary models"/>
</dbReference>
<dbReference type="PhylomeDB" id="Q9NRM0"/>
<dbReference type="TreeFam" id="TF313762"/>
<dbReference type="PathwayCommons" id="Q9NRM0"/>
<dbReference type="Reactome" id="R-HSA-189200">
    <property type="pathway name" value="Cellular hexose transport"/>
</dbReference>
<dbReference type="Reactome" id="R-HSA-5619047">
    <property type="pathway name" value="Defective SLC2A9 causes hypouricemia renal 2 (RHUC2)"/>
</dbReference>
<dbReference type="SignaLink" id="Q9NRM0"/>
<dbReference type="BioGRID-ORCS" id="56606">
    <property type="hits" value="9 hits in 1154 CRISPR screens"/>
</dbReference>
<dbReference type="ChiTaRS" id="SLC2A9">
    <property type="organism name" value="human"/>
</dbReference>
<dbReference type="GeneWiki" id="SLC2A9"/>
<dbReference type="GenomeRNAi" id="56606"/>
<dbReference type="Pharos" id="Q9NRM0">
    <property type="development level" value="Tbio"/>
</dbReference>
<dbReference type="PRO" id="PR:Q9NRM0"/>
<dbReference type="Proteomes" id="UP000005640">
    <property type="component" value="Chromosome 4"/>
</dbReference>
<dbReference type="RNAct" id="Q9NRM0">
    <property type="molecule type" value="protein"/>
</dbReference>
<dbReference type="Bgee" id="ENSG00000109667">
    <property type="expression patterns" value="Expressed in buccal mucosa cell and 127 other cell types or tissues"/>
</dbReference>
<dbReference type="ExpressionAtlas" id="Q9NRM0">
    <property type="expression patterns" value="baseline and differential"/>
</dbReference>
<dbReference type="GO" id="GO:0016324">
    <property type="term" value="C:apical plasma membrane"/>
    <property type="evidence" value="ECO:0007669"/>
    <property type="project" value="UniProtKB-SubCell"/>
</dbReference>
<dbReference type="GO" id="GO:0016323">
    <property type="term" value="C:basolateral plasma membrane"/>
    <property type="evidence" value="ECO:0007669"/>
    <property type="project" value="UniProtKB-SubCell"/>
</dbReference>
<dbReference type="GO" id="GO:0016020">
    <property type="term" value="C:membrane"/>
    <property type="evidence" value="ECO:0000303"/>
    <property type="project" value="UniProtKB"/>
</dbReference>
<dbReference type="GO" id="GO:0005886">
    <property type="term" value="C:plasma membrane"/>
    <property type="evidence" value="ECO:0000314"/>
    <property type="project" value="UniProtKB"/>
</dbReference>
<dbReference type="GO" id="GO:0005351">
    <property type="term" value="F:carbohydrate:proton symporter activity"/>
    <property type="evidence" value="ECO:0000303"/>
    <property type="project" value="UniProtKB"/>
</dbReference>
<dbReference type="GO" id="GO:0055056">
    <property type="term" value="F:D-glucose transmembrane transporter activity"/>
    <property type="evidence" value="ECO:0000314"/>
    <property type="project" value="UniProtKB"/>
</dbReference>
<dbReference type="GO" id="GO:0005353">
    <property type="term" value="F:fructose transmembrane transporter activity"/>
    <property type="evidence" value="ECO:0000314"/>
    <property type="project" value="UniProtKB"/>
</dbReference>
<dbReference type="GO" id="GO:0022857">
    <property type="term" value="F:transmembrane transporter activity"/>
    <property type="evidence" value="ECO:0000304"/>
    <property type="project" value="Reactome"/>
</dbReference>
<dbReference type="GO" id="GO:0015143">
    <property type="term" value="F:urate transmembrane transporter activity"/>
    <property type="evidence" value="ECO:0000314"/>
    <property type="project" value="UniProtKB"/>
</dbReference>
<dbReference type="GO" id="GO:0046323">
    <property type="term" value="P:D-glucose import"/>
    <property type="evidence" value="ECO:0000318"/>
    <property type="project" value="GO_Central"/>
</dbReference>
<dbReference type="GO" id="GO:1904659">
    <property type="term" value="P:D-glucose transmembrane transport"/>
    <property type="evidence" value="ECO:0000314"/>
    <property type="project" value="UniProtKB"/>
</dbReference>
<dbReference type="GO" id="GO:0070837">
    <property type="term" value="P:dehydroascorbic acid transport"/>
    <property type="evidence" value="ECO:0000318"/>
    <property type="project" value="GO_Central"/>
</dbReference>
<dbReference type="GO" id="GO:0015755">
    <property type="term" value="P:fructose transmembrane transport"/>
    <property type="evidence" value="ECO:0000314"/>
    <property type="project" value="UniProtKB"/>
</dbReference>
<dbReference type="GO" id="GO:0008645">
    <property type="term" value="P:hexose transmembrane transport"/>
    <property type="evidence" value="ECO:0000304"/>
    <property type="project" value="Reactome"/>
</dbReference>
<dbReference type="GO" id="GO:0046415">
    <property type="term" value="P:urate metabolic process"/>
    <property type="evidence" value="ECO:0000315"/>
    <property type="project" value="UniProtKB"/>
</dbReference>
<dbReference type="GO" id="GO:0015747">
    <property type="term" value="P:urate transport"/>
    <property type="evidence" value="ECO:0000314"/>
    <property type="project" value="UniProtKB"/>
</dbReference>
<dbReference type="CDD" id="cd17432">
    <property type="entry name" value="MFS_GLUT_Class2"/>
    <property type="match status" value="1"/>
</dbReference>
<dbReference type="FunFam" id="1.20.1250.20:FF:000029">
    <property type="entry name" value="solute carrier family 2, facilitated glucose transporter member 4"/>
    <property type="match status" value="1"/>
</dbReference>
<dbReference type="Gene3D" id="1.20.1250.20">
    <property type="entry name" value="MFS general substrate transporter like domains"/>
    <property type="match status" value="1"/>
</dbReference>
<dbReference type="InterPro" id="IPR045263">
    <property type="entry name" value="GLUT"/>
</dbReference>
<dbReference type="InterPro" id="IPR020846">
    <property type="entry name" value="MFS_dom"/>
</dbReference>
<dbReference type="InterPro" id="IPR005828">
    <property type="entry name" value="MFS_sugar_transport-like"/>
</dbReference>
<dbReference type="InterPro" id="IPR036259">
    <property type="entry name" value="MFS_trans_sf"/>
</dbReference>
<dbReference type="InterPro" id="IPR003663">
    <property type="entry name" value="Sugar/inositol_transpt"/>
</dbReference>
<dbReference type="InterPro" id="IPR005829">
    <property type="entry name" value="Sugar_transporter_CS"/>
</dbReference>
<dbReference type="NCBIfam" id="TIGR00879">
    <property type="entry name" value="SP"/>
    <property type="match status" value="1"/>
</dbReference>
<dbReference type="PANTHER" id="PTHR23503">
    <property type="entry name" value="SOLUTE CARRIER FAMILY 2"/>
    <property type="match status" value="1"/>
</dbReference>
<dbReference type="PANTHER" id="PTHR23503:SF35">
    <property type="entry name" value="SOLUTE CARRIER FAMILY 2, FACILITATED GLUCOSE TRANSPORTER MEMBER 9"/>
    <property type="match status" value="1"/>
</dbReference>
<dbReference type="Pfam" id="PF00083">
    <property type="entry name" value="Sugar_tr"/>
    <property type="match status" value="1"/>
</dbReference>
<dbReference type="PRINTS" id="PR00171">
    <property type="entry name" value="SUGRTRNSPORT"/>
</dbReference>
<dbReference type="SUPFAM" id="SSF103473">
    <property type="entry name" value="MFS general substrate transporter"/>
    <property type="match status" value="1"/>
</dbReference>
<dbReference type="PROSITE" id="PS50850">
    <property type="entry name" value="MFS"/>
    <property type="match status" value="1"/>
</dbReference>
<dbReference type="PROSITE" id="PS00216">
    <property type="entry name" value="SUGAR_TRANSPORT_1"/>
    <property type="match status" value="1"/>
</dbReference>
<dbReference type="PROSITE" id="PS00217">
    <property type="entry name" value="SUGAR_TRANSPORT_2"/>
    <property type="match status" value="1"/>
</dbReference>
<feature type="chain" id="PRO_0000050378" description="Solute carrier family 2, facilitated glucose transporter member 9">
    <location>
        <begin position="1"/>
        <end position="540"/>
    </location>
</feature>
<feature type="topological domain" description="Cytoplasmic" evidence="1">
    <location>
        <begin position="1"/>
        <end position="51"/>
    </location>
</feature>
<feature type="transmembrane region" description="Helical; Name=1" evidence="1">
    <location>
        <begin position="52"/>
        <end position="72"/>
    </location>
</feature>
<feature type="topological domain" description="Extracellular" evidence="1">
    <location>
        <begin position="73"/>
        <end position="107"/>
    </location>
</feature>
<feature type="transmembrane region" description="Helical; Name=2" evidence="1">
    <location>
        <begin position="108"/>
        <end position="128"/>
    </location>
</feature>
<feature type="topological domain" description="Cytoplasmic" evidence="1">
    <location>
        <begin position="129"/>
        <end position="140"/>
    </location>
</feature>
<feature type="transmembrane region" description="Helical; Name=3" evidence="1">
    <location>
        <begin position="141"/>
        <end position="161"/>
    </location>
</feature>
<feature type="topological domain" description="Extracellular" evidence="1">
    <location>
        <begin position="162"/>
        <end position="171"/>
    </location>
</feature>
<feature type="transmembrane region" description="Helical; Name=4" evidence="1">
    <location>
        <begin position="172"/>
        <end position="192"/>
    </location>
</feature>
<feature type="topological domain" description="Cytoplasmic" evidence="1">
    <location>
        <begin position="193"/>
        <end position="200"/>
    </location>
</feature>
<feature type="transmembrane region" description="Helical; Name=5" evidence="1">
    <location>
        <begin position="201"/>
        <end position="221"/>
    </location>
</feature>
<feature type="topological domain" description="Extracellular" evidence="1">
    <location>
        <begin position="222"/>
        <end position="231"/>
    </location>
</feature>
<feature type="transmembrane region" description="Helical; Name=6" evidence="1">
    <location>
        <begin position="232"/>
        <end position="252"/>
    </location>
</feature>
<feature type="topological domain" description="Cytoplasmic" evidence="1">
    <location>
        <begin position="253"/>
        <end position="316"/>
    </location>
</feature>
<feature type="transmembrane region" description="Helical; Name=7" evidence="1">
    <location>
        <begin position="317"/>
        <end position="337"/>
    </location>
</feature>
<feature type="topological domain" description="Extracellular" evidence="1">
    <location>
        <begin position="338"/>
        <end position="354"/>
    </location>
</feature>
<feature type="transmembrane region" description="Helical; Name=8" evidence="1">
    <location>
        <begin position="355"/>
        <end position="375"/>
    </location>
</feature>
<feature type="topological domain" description="Cytoplasmic" evidence="1">
    <location>
        <begin position="376"/>
        <end position="381"/>
    </location>
</feature>
<feature type="transmembrane region" description="Helical; Name=9" evidence="1">
    <location>
        <begin position="382"/>
        <end position="402"/>
    </location>
</feature>
<feature type="topological domain" description="Extracellular" evidence="1">
    <location>
        <begin position="403"/>
        <end position="415"/>
    </location>
</feature>
<feature type="transmembrane region" description="Helical; Name=10" evidence="1">
    <location>
        <begin position="416"/>
        <end position="436"/>
    </location>
</feature>
<feature type="topological domain" description="Cytoplasmic" evidence="1">
    <location>
        <begin position="437"/>
        <end position="451"/>
    </location>
</feature>
<feature type="transmembrane region" description="Helical; Name=11" evidence="1">
    <location>
        <begin position="452"/>
        <end position="472"/>
    </location>
</feature>
<feature type="topological domain" description="Extracellular" evidence="1">
    <location>
        <begin position="473"/>
        <end position="478"/>
    </location>
</feature>
<feature type="transmembrane region" description="Helical; Name=12" evidence="1">
    <location>
        <begin position="479"/>
        <end position="499"/>
    </location>
</feature>
<feature type="topological domain" description="Cytoplasmic" evidence="1">
    <location>
        <begin position="500"/>
        <end position="540"/>
    </location>
</feature>
<feature type="region of interest" description="Disordered" evidence="2">
    <location>
        <begin position="1"/>
        <end position="31"/>
    </location>
</feature>
<feature type="region of interest" description="Disordered" evidence="2">
    <location>
        <begin position="519"/>
        <end position="540"/>
    </location>
</feature>
<feature type="modified residue" description="Phosphoserine" evidence="31">
    <location>
        <position position="9"/>
    </location>
</feature>
<feature type="modified residue" description="Phosphoserine" evidence="31">
    <location>
        <position position="515"/>
    </location>
</feature>
<feature type="glycosylation site" description="N-linked (GlcNAc...) asparagine" evidence="1">
    <location>
        <position position="90"/>
    </location>
</feature>
<feature type="splice variant" id="VSP_034860" description="In isoform 2." evidence="26">
    <original>MARKQNRNSKELGLVPLTDDTSHAGPPGPGRALLECDHLRSGVPGGRRRK</original>
    <variation>MKLSKKDRGEDEESDSAKKKL</variation>
    <location>
        <begin position="1"/>
        <end position="50"/>
    </location>
</feature>
<feature type="sequence variant" id="VAR_045648" evidence="9">
    <original>S</original>
    <variation>N</variation>
    <location>
        <position position="22"/>
    </location>
</feature>
<feature type="sequence variant" id="VAR_012157" description="No effect on urate transport activity; dbSNP:rs2276961." evidence="3 6 19">
    <original>G</original>
    <variation>R</variation>
    <location>
        <position position="25"/>
    </location>
</feature>
<feature type="sequence variant" id="VAR_065772" description="In RHUC2; reduced urate transport activity; decreased protein expression; decreased urate uptake; no effect on glucose transport; dbSNP:rs863225072." evidence="13 22">
    <original>L</original>
    <variation>R</variation>
    <location>
        <position position="75"/>
    </location>
</feature>
<feature type="sequence variant" id="VAR_065773" description="In RHUC2; markedly reduced urate transport activity; decreased protein expression; decreased urate uptake; no effect on glucose transport; dbSNP:rs181509591." evidence="14 22">
    <original>T</original>
    <variation>M</variation>
    <location>
        <position position="125"/>
    </location>
</feature>
<feature type="sequence variant" id="VAR_075343" description="No effect on urate transport activity; dbSNP:rs144196049." evidence="19">
    <original>V</original>
    <variation>M</variation>
    <location>
        <position position="169"/>
    </location>
</feature>
<feature type="sequence variant" id="VAR_065774" description="In RHUC2; uncertain significance; according to PubMed:21810765 the variant results in markedly reduced urate uptake, however according to PubMed:29967582 urate transport activity is not affected; no effect on Vmax; no effect on Km for urate; decreased protein expression; no effect on glucose transport; dbSNP:rs776127501." evidence="14 22">
    <original>R</original>
    <variation>C</variation>
    <location>
        <position position="171"/>
    </location>
</feature>
<feature type="sequence variant" id="VAR_045649" description="In dbSNP:rs376990050." evidence="8">
    <original>E</original>
    <variation>D</variation>
    <location>
        <position position="191"/>
    </location>
</feature>
<feature type="sequence variant" id="VAR_065775" description="In RHUC2; markedly reduced urate transport activity; decreased Vmax; decreased urate uptake; no effect on protein expression; no effect on glucose transport; dbSNP:rs121908322." evidence="12 15 22">
    <original>R</original>
    <variation>C</variation>
    <location>
        <position position="198"/>
    </location>
</feature>
<feature type="sequence variant" id="VAR_045650" description="In RHUC2; decreased protein expression; decreased urate uptake; no effect on glucose transport; dbSNP:rs561633150." evidence="9 16 22">
    <original>G</original>
    <variation>R</variation>
    <location>
        <position position="216"/>
    </location>
</feature>
<feature type="sequence variant" id="VAR_045651" description="No effect on urate transport activity; dbSNP:rs112404957." evidence="9 19">
    <original>T</original>
    <variation>M</variation>
    <location>
        <position position="275"/>
    </location>
</feature>
<feature type="sequence variant" id="VAR_045652" description="No effect on urate transport activity; dbSNP:rs73225891." evidence="8 9 19">
    <original>D</original>
    <variation>H</variation>
    <location>
        <position position="281"/>
    </location>
</feature>
<feature type="sequence variant" id="VAR_012158" description="No effect on urate transport activity; dbSNP:rs16890979." evidence="8 16 19 22">
    <original>V</original>
    <variation>I</variation>
    <location>
        <position position="282"/>
    </location>
</feature>
<feature type="sequence variant" id="VAR_020337" description="No effect on urate transport activity; no effect on protein expression; no effect on glucose transport; dbSNP:rs3733591." evidence="16 19 22">
    <original>R</original>
    <variation>H</variation>
    <location>
        <position position="294"/>
    </location>
</feature>
<feature type="sequence variant" id="VAR_045653" description="In dbSNP:rs145688560." evidence="9">
    <original>R</original>
    <variation>H</variation>
    <location>
        <position position="300"/>
    </location>
</feature>
<feature type="sequence variant" id="VAR_086380" description="In RHUC2; decreased urate uptake; increased Km for urate; no effect on protein expression; no effect on glucose transport; dbSNP:rs753482595." evidence="16 22">
    <original>N</original>
    <variation>S</variation>
    <location>
        <position position="333"/>
    </location>
</feature>
<feature type="sequence variant" id="VAR_012159" description="No effect on urate transport activity; no effect on urate transport; no effect on protein expression; no effect on glucose transport; dbSNP:rs2280205." evidence="3 6 8 16 19 22">
    <original>P</original>
    <variation>L</variation>
    <location>
        <position position="350"/>
    </location>
</feature>
<feature type="sequence variant" id="VAR_065776" description="In RHUC2; markedly reduced urate transport activity; decreased Vmax; no effect on protein expression; no effect on glucose transport; dbSNP:rs121908321." evidence="12 15 22">
    <original>R</original>
    <variation>W</variation>
    <location>
        <position position="380"/>
    </location>
</feature>
<feature type="sequence variant" id="VAR_086381" description="In RHUC2; uncertain significance; according to PubMed:18701466 the variant results in decreased urate uptake, however according to PubMed:22132964 and PubMed:29967582 urate transport activity is not affected; no effect on Vmax for urate uptake; no effect on affinity for urate; no effect on protein expression; no effect on localization to plasma membrane; no effect on glucose transport; dbSNP:rs121908323." evidence="10 15 22">
    <original>P</original>
    <variation>R</variation>
    <location>
        <position position="412"/>
    </location>
</feature>
<feature type="mutagenesis site" description="No effect on fructose transport. Increased urate binding affinity and decreased urate transport capacity." evidence="21">
    <original>C</original>
    <variation>V</variation>
    <location>
        <position position="157"/>
    </location>
</feature>
<feature type="mutagenesis site" description="Decreased urate uptake. Decreased Vmax for urate transport. Has no effect on glucose transport." evidence="22">
    <original>C</original>
    <variation>F</variation>
    <location>
        <position position="210"/>
    </location>
</feature>
<feature type="mutagenesis site" description="Decreased fructose transport. Higher affinity and lower transport capacity for urate." evidence="21">
    <original>C</original>
    <variation>T</variation>
    <location>
        <position position="210"/>
    </location>
</feature>
<feature type="mutagenesis site" description="No effect on urate and fructose transport." evidence="21">
    <original>C</original>
    <variation>G</variation>
    <location>
        <position position="326"/>
    </location>
</feature>
<feature type="mutagenesis site" description="Increased fructose transport. Highly reduced urate transport." evidence="21">
    <original>C</original>
    <variation>S</variation>
    <location>
        <position position="330"/>
    </location>
</feature>
<feature type="mutagenesis site" description="Increased fructose binding affinity and decreased fructose transport capacity." evidence="21">
    <original>L</original>
    <variation>V</variation>
    <location>
        <position position="332"/>
    </location>
</feature>
<feature type="mutagenesis site" description="No effect on fructose transport. Higher affinity and lower transport capacity for urate." evidence="21">
    <original>C</original>
    <variation>A</variation>
    <location>
        <position position="427"/>
    </location>
</feature>
<feature type="mutagenesis site" description="No effect on urate and fructose transport." evidence="21">
    <original>C</original>
    <variation>S</variation>
    <location>
        <position position="480"/>
    </location>
</feature>
<feature type="mutagenesis site" description="No effect on fructose transport. Highly reduced urate transport." evidence="21">
    <original>C</original>
    <variation>L</variation>
    <location>
        <position position="488"/>
    </location>
</feature>
<feature type="sequence variant" id="VAR_082920" description="In dbSNP:rs6820230." evidence="29">
    <original>A</original>
    <variation>T</variation>
    <location sequence="Q9NRM0-2">
        <position position="17"/>
    </location>
</feature>
<gene>
    <name evidence="24 30" type="primary">SLC2A9</name>
    <name evidence="24" type="synonym">GLUT9</name>
</gene>
<evidence type="ECO:0000255" key="1"/>
<evidence type="ECO:0000256" key="2">
    <source>
        <dbReference type="SAM" id="MobiDB-lite"/>
    </source>
</evidence>
<evidence type="ECO:0000269" key="3">
    <source>
    </source>
</evidence>
<evidence type="ECO:0000269" key="4">
    <source>
    </source>
</evidence>
<evidence type="ECO:0000269" key="5">
    <source>
    </source>
</evidence>
<evidence type="ECO:0000269" key="6">
    <source>
    </source>
</evidence>
<evidence type="ECO:0000269" key="7">
    <source>
    </source>
</evidence>
<evidence type="ECO:0000269" key="8">
    <source>
    </source>
</evidence>
<evidence type="ECO:0000269" key="9">
    <source>
    </source>
</evidence>
<evidence type="ECO:0000269" key="10">
    <source>
    </source>
</evidence>
<evidence type="ECO:0000269" key="11">
    <source>
    </source>
</evidence>
<evidence type="ECO:0000269" key="12">
    <source>
    </source>
</evidence>
<evidence type="ECO:0000269" key="13">
    <source>
    </source>
</evidence>
<evidence type="ECO:0000269" key="14">
    <source>
    </source>
</evidence>
<evidence type="ECO:0000269" key="15">
    <source>
    </source>
</evidence>
<evidence type="ECO:0000269" key="16">
    <source>
    </source>
</evidence>
<evidence type="ECO:0000269" key="17">
    <source>
    </source>
</evidence>
<evidence type="ECO:0000269" key="18">
    <source>
    </source>
</evidence>
<evidence type="ECO:0000269" key="19">
    <source>
    </source>
</evidence>
<evidence type="ECO:0000269" key="20">
    <source>
    </source>
</evidence>
<evidence type="ECO:0000269" key="21">
    <source>
    </source>
</evidence>
<evidence type="ECO:0000269" key="22">
    <source>
    </source>
</evidence>
<evidence type="ECO:0000269" key="23">
    <source>
    </source>
</evidence>
<evidence type="ECO:0000303" key="24">
    <source>
    </source>
</evidence>
<evidence type="ECO:0000303" key="25">
    <source>
    </source>
</evidence>
<evidence type="ECO:0000303" key="26">
    <source>
    </source>
</evidence>
<evidence type="ECO:0000303" key="27">
    <source>
    </source>
</evidence>
<evidence type="ECO:0000303" key="28">
    <source>
    </source>
</evidence>
<evidence type="ECO:0000305" key="29"/>
<evidence type="ECO:0000312" key="30">
    <source>
        <dbReference type="HGNC" id="HGNC:13446"/>
    </source>
</evidence>
<evidence type="ECO:0007744" key="31">
    <source>
    </source>
</evidence>
<proteinExistence type="evidence at protein level"/>
<organism>
    <name type="scientific">Homo sapiens</name>
    <name type="common">Human</name>
    <dbReference type="NCBI Taxonomy" id="9606"/>
    <lineage>
        <taxon>Eukaryota</taxon>
        <taxon>Metazoa</taxon>
        <taxon>Chordata</taxon>
        <taxon>Craniata</taxon>
        <taxon>Vertebrata</taxon>
        <taxon>Euteleostomi</taxon>
        <taxon>Mammalia</taxon>
        <taxon>Eutheria</taxon>
        <taxon>Euarchontoglires</taxon>
        <taxon>Primates</taxon>
        <taxon>Haplorrhini</taxon>
        <taxon>Catarrhini</taxon>
        <taxon>Hominidae</taxon>
        <taxon>Homo</taxon>
    </lineage>
</organism>